<evidence type="ECO:0000255" key="1">
    <source>
        <dbReference type="HAMAP-Rule" id="MF_01336"/>
    </source>
</evidence>
<evidence type="ECO:0000305" key="2"/>
<gene>
    <name evidence="1" type="primary">rplY</name>
    <name type="ordered locus">SeSA_A2464</name>
</gene>
<sequence>MFTINAEVRKEQGKGASRRLRAANKFPAIIYGGSEAPIAIELDHDQVMNMQAKAEFYSEVLTLVVDGKEVKVKAQAVQRHAYKPKLTHIDFVRA</sequence>
<protein>
    <recommendedName>
        <fullName evidence="1">Large ribosomal subunit protein bL25</fullName>
    </recommendedName>
    <alternativeName>
        <fullName evidence="2">50S ribosomal protein L25</fullName>
    </alternativeName>
</protein>
<organism>
    <name type="scientific">Salmonella schwarzengrund (strain CVM19633)</name>
    <dbReference type="NCBI Taxonomy" id="439843"/>
    <lineage>
        <taxon>Bacteria</taxon>
        <taxon>Pseudomonadati</taxon>
        <taxon>Pseudomonadota</taxon>
        <taxon>Gammaproteobacteria</taxon>
        <taxon>Enterobacterales</taxon>
        <taxon>Enterobacteriaceae</taxon>
        <taxon>Salmonella</taxon>
    </lineage>
</organism>
<keyword id="KW-0687">Ribonucleoprotein</keyword>
<keyword id="KW-0689">Ribosomal protein</keyword>
<keyword id="KW-0694">RNA-binding</keyword>
<keyword id="KW-0699">rRNA-binding</keyword>
<accession>B4TPC7</accession>
<dbReference type="EMBL" id="CP001127">
    <property type="protein sequence ID" value="ACF90683.1"/>
    <property type="molecule type" value="Genomic_DNA"/>
</dbReference>
<dbReference type="RefSeq" id="WP_000494192.1">
    <property type="nucleotide sequence ID" value="NC_011094.1"/>
</dbReference>
<dbReference type="SMR" id="B4TPC7"/>
<dbReference type="KEGG" id="sew:SeSA_A2464"/>
<dbReference type="HOGENOM" id="CLU_137946_0_0_6"/>
<dbReference type="Proteomes" id="UP000001865">
    <property type="component" value="Chromosome"/>
</dbReference>
<dbReference type="GO" id="GO:0022625">
    <property type="term" value="C:cytosolic large ribosomal subunit"/>
    <property type="evidence" value="ECO:0007669"/>
    <property type="project" value="TreeGrafter"/>
</dbReference>
<dbReference type="GO" id="GO:0008097">
    <property type="term" value="F:5S rRNA binding"/>
    <property type="evidence" value="ECO:0007669"/>
    <property type="project" value="InterPro"/>
</dbReference>
<dbReference type="GO" id="GO:0003735">
    <property type="term" value="F:structural constituent of ribosome"/>
    <property type="evidence" value="ECO:0007669"/>
    <property type="project" value="InterPro"/>
</dbReference>
<dbReference type="GO" id="GO:0006412">
    <property type="term" value="P:translation"/>
    <property type="evidence" value="ECO:0007669"/>
    <property type="project" value="UniProtKB-UniRule"/>
</dbReference>
<dbReference type="CDD" id="cd00495">
    <property type="entry name" value="Ribosomal_L25_TL5_CTC"/>
    <property type="match status" value="1"/>
</dbReference>
<dbReference type="FunFam" id="2.40.240.10:FF:000002">
    <property type="entry name" value="50S ribosomal protein L25"/>
    <property type="match status" value="1"/>
</dbReference>
<dbReference type="Gene3D" id="2.40.240.10">
    <property type="entry name" value="Ribosomal Protein L25, Chain P"/>
    <property type="match status" value="1"/>
</dbReference>
<dbReference type="HAMAP" id="MF_01336">
    <property type="entry name" value="Ribosomal_bL25"/>
    <property type="match status" value="1"/>
</dbReference>
<dbReference type="InterPro" id="IPR020056">
    <property type="entry name" value="Rbsml_bL25/Gln-tRNA_synth_N"/>
</dbReference>
<dbReference type="InterPro" id="IPR011035">
    <property type="entry name" value="Ribosomal_bL25/Gln-tRNA_synth"/>
</dbReference>
<dbReference type="InterPro" id="IPR020055">
    <property type="entry name" value="Ribosomal_bL25_short"/>
</dbReference>
<dbReference type="InterPro" id="IPR029751">
    <property type="entry name" value="Ribosomal_L25_dom"/>
</dbReference>
<dbReference type="InterPro" id="IPR020930">
    <property type="entry name" value="Ribosomal_uL5_bac-type"/>
</dbReference>
<dbReference type="NCBIfam" id="NF004612">
    <property type="entry name" value="PRK05943.1"/>
    <property type="match status" value="1"/>
</dbReference>
<dbReference type="PANTHER" id="PTHR33284">
    <property type="entry name" value="RIBOSOMAL PROTEIN L25/GLN-TRNA SYNTHETASE, ANTI-CODON-BINDING DOMAIN-CONTAINING PROTEIN"/>
    <property type="match status" value="1"/>
</dbReference>
<dbReference type="PANTHER" id="PTHR33284:SF1">
    <property type="entry name" value="RIBOSOMAL PROTEIN L25_GLN-TRNA SYNTHETASE, ANTI-CODON-BINDING DOMAIN-CONTAINING PROTEIN"/>
    <property type="match status" value="1"/>
</dbReference>
<dbReference type="Pfam" id="PF01386">
    <property type="entry name" value="Ribosomal_L25p"/>
    <property type="match status" value="1"/>
</dbReference>
<dbReference type="SUPFAM" id="SSF50715">
    <property type="entry name" value="Ribosomal protein L25-like"/>
    <property type="match status" value="1"/>
</dbReference>
<proteinExistence type="inferred from homology"/>
<reference key="1">
    <citation type="journal article" date="2011" name="J. Bacteriol.">
        <title>Comparative genomics of 28 Salmonella enterica isolates: evidence for CRISPR-mediated adaptive sublineage evolution.</title>
        <authorList>
            <person name="Fricke W.F."/>
            <person name="Mammel M.K."/>
            <person name="McDermott P.F."/>
            <person name="Tartera C."/>
            <person name="White D.G."/>
            <person name="Leclerc J.E."/>
            <person name="Ravel J."/>
            <person name="Cebula T.A."/>
        </authorList>
    </citation>
    <scope>NUCLEOTIDE SEQUENCE [LARGE SCALE GENOMIC DNA]</scope>
    <source>
        <strain>CVM19633</strain>
    </source>
</reference>
<comment type="function">
    <text evidence="1">This is one of the proteins that binds to the 5S RNA in the ribosome where it forms part of the central protuberance.</text>
</comment>
<comment type="subunit">
    <text evidence="1">Part of the 50S ribosomal subunit; part of the 5S rRNA/L5/L18/L25 subcomplex. Contacts the 5S rRNA. Binds to the 5S rRNA independently of L5 and L18.</text>
</comment>
<comment type="similarity">
    <text evidence="1">Belongs to the bacterial ribosomal protein bL25 family.</text>
</comment>
<feature type="chain" id="PRO_1000142596" description="Large ribosomal subunit protein bL25">
    <location>
        <begin position="1"/>
        <end position="94"/>
    </location>
</feature>
<name>RL25_SALSV</name>